<name>RIMM_RENSM</name>
<organism>
    <name type="scientific">Renibacterium salmoninarum (strain ATCC 33209 / DSM 20767 / JCM 11484 / NBRC 15589 / NCIMB 2235)</name>
    <dbReference type="NCBI Taxonomy" id="288705"/>
    <lineage>
        <taxon>Bacteria</taxon>
        <taxon>Bacillati</taxon>
        <taxon>Actinomycetota</taxon>
        <taxon>Actinomycetes</taxon>
        <taxon>Micrococcales</taxon>
        <taxon>Micrococcaceae</taxon>
        <taxon>Renibacterium</taxon>
    </lineage>
</organism>
<dbReference type="EMBL" id="CP000910">
    <property type="protein sequence ID" value="ABY22821.1"/>
    <property type="status" value="ALT_INIT"/>
    <property type="molecule type" value="Genomic_DNA"/>
</dbReference>
<dbReference type="RefSeq" id="WP_080503763.1">
    <property type="nucleotide sequence ID" value="NC_010168.1"/>
</dbReference>
<dbReference type="SMR" id="A9WP46"/>
<dbReference type="STRING" id="288705.RSal33209_1083"/>
<dbReference type="KEGG" id="rsa:RSal33209_1083"/>
<dbReference type="eggNOG" id="COG0806">
    <property type="taxonomic scope" value="Bacteria"/>
</dbReference>
<dbReference type="HOGENOM" id="CLU_077636_0_0_11"/>
<dbReference type="Proteomes" id="UP000002007">
    <property type="component" value="Chromosome"/>
</dbReference>
<dbReference type="GO" id="GO:0005737">
    <property type="term" value="C:cytoplasm"/>
    <property type="evidence" value="ECO:0007669"/>
    <property type="project" value="UniProtKB-SubCell"/>
</dbReference>
<dbReference type="GO" id="GO:0005840">
    <property type="term" value="C:ribosome"/>
    <property type="evidence" value="ECO:0007669"/>
    <property type="project" value="InterPro"/>
</dbReference>
<dbReference type="GO" id="GO:0043022">
    <property type="term" value="F:ribosome binding"/>
    <property type="evidence" value="ECO:0007669"/>
    <property type="project" value="InterPro"/>
</dbReference>
<dbReference type="GO" id="GO:0042274">
    <property type="term" value="P:ribosomal small subunit biogenesis"/>
    <property type="evidence" value="ECO:0007669"/>
    <property type="project" value="UniProtKB-UniRule"/>
</dbReference>
<dbReference type="GO" id="GO:0006364">
    <property type="term" value="P:rRNA processing"/>
    <property type="evidence" value="ECO:0007669"/>
    <property type="project" value="UniProtKB-UniRule"/>
</dbReference>
<dbReference type="Gene3D" id="2.30.30.240">
    <property type="entry name" value="PRC-barrel domain"/>
    <property type="match status" value="1"/>
</dbReference>
<dbReference type="Gene3D" id="2.40.30.60">
    <property type="entry name" value="RimM"/>
    <property type="match status" value="1"/>
</dbReference>
<dbReference type="HAMAP" id="MF_00014">
    <property type="entry name" value="Ribosome_mat_RimM"/>
    <property type="match status" value="1"/>
</dbReference>
<dbReference type="InterPro" id="IPR011033">
    <property type="entry name" value="PRC_barrel-like_sf"/>
</dbReference>
<dbReference type="InterPro" id="IPR056792">
    <property type="entry name" value="PRC_RimM"/>
</dbReference>
<dbReference type="InterPro" id="IPR011961">
    <property type="entry name" value="RimM"/>
</dbReference>
<dbReference type="InterPro" id="IPR002676">
    <property type="entry name" value="RimM_N"/>
</dbReference>
<dbReference type="InterPro" id="IPR036976">
    <property type="entry name" value="RimM_N_sf"/>
</dbReference>
<dbReference type="InterPro" id="IPR009000">
    <property type="entry name" value="Transl_B-barrel_sf"/>
</dbReference>
<dbReference type="NCBIfam" id="TIGR02273">
    <property type="entry name" value="16S_RimM"/>
    <property type="match status" value="1"/>
</dbReference>
<dbReference type="PANTHER" id="PTHR33692">
    <property type="entry name" value="RIBOSOME MATURATION FACTOR RIMM"/>
    <property type="match status" value="1"/>
</dbReference>
<dbReference type="PANTHER" id="PTHR33692:SF1">
    <property type="entry name" value="RIBOSOME MATURATION FACTOR RIMM"/>
    <property type="match status" value="1"/>
</dbReference>
<dbReference type="Pfam" id="PF24986">
    <property type="entry name" value="PRC_RimM"/>
    <property type="match status" value="1"/>
</dbReference>
<dbReference type="Pfam" id="PF01782">
    <property type="entry name" value="RimM"/>
    <property type="match status" value="1"/>
</dbReference>
<dbReference type="SUPFAM" id="SSF50346">
    <property type="entry name" value="PRC-barrel domain"/>
    <property type="match status" value="1"/>
</dbReference>
<dbReference type="SUPFAM" id="SSF50447">
    <property type="entry name" value="Translation proteins"/>
    <property type="match status" value="1"/>
</dbReference>
<proteinExistence type="inferred from homology"/>
<reference key="1">
    <citation type="journal article" date="2008" name="J. Bacteriol.">
        <title>Genome sequence of the fish pathogen Renibacterium salmoninarum suggests reductive evolution away from an environmental Arthrobacter ancestor.</title>
        <authorList>
            <person name="Wiens G.D."/>
            <person name="Rockey D.D."/>
            <person name="Wu Z."/>
            <person name="Chang J."/>
            <person name="Levy R."/>
            <person name="Crane S."/>
            <person name="Chen D.S."/>
            <person name="Capri G.R."/>
            <person name="Burnett J.R."/>
            <person name="Sudheesh P.S."/>
            <person name="Schipma M.J."/>
            <person name="Burd H."/>
            <person name="Bhattacharyya A."/>
            <person name="Rhodes L.D."/>
            <person name="Kaul R."/>
            <person name="Strom M.S."/>
        </authorList>
    </citation>
    <scope>NUCLEOTIDE SEQUENCE [LARGE SCALE GENOMIC DNA]</scope>
    <source>
        <strain>ATCC 33209 / DSM 20767 / JCM 11484 / NBRC 15589 / NCIMB 2235</strain>
    </source>
</reference>
<evidence type="ECO:0000255" key="1">
    <source>
        <dbReference type="HAMAP-Rule" id="MF_00014"/>
    </source>
</evidence>
<evidence type="ECO:0000305" key="2"/>
<sequence>MQVHVGRIGKPHGIRGEVTVEVLTDTPQERFSAGAVFSTEPTSAGPLTVETARWNKDILLLGFEEVNDRNRAETLRGTRLIFETDSVASDESESDSWYEHELIGLEARVGDQTVGKVSALNPMPAQDLLVITTAAGEEVLVPFVAEIVPEVDIAAGFIRLVPPGGLFDINRKDAE</sequence>
<comment type="function">
    <text evidence="1">An accessory protein needed during the final step in the assembly of 30S ribosomal subunit, possibly for assembly of the head region. Essential for efficient processing of 16S rRNA. May be needed both before and after RbfA during the maturation of 16S rRNA. It has affinity for free ribosomal 30S subunits but not for 70S ribosomes.</text>
</comment>
<comment type="subunit">
    <text evidence="1">Binds ribosomal protein uS19.</text>
</comment>
<comment type="subcellular location">
    <subcellularLocation>
        <location evidence="1">Cytoplasm</location>
    </subcellularLocation>
</comment>
<comment type="domain">
    <text evidence="1">The PRC barrel domain binds ribosomal protein uS19.</text>
</comment>
<comment type="similarity">
    <text evidence="1">Belongs to the RimM family.</text>
</comment>
<comment type="sequence caution" evidence="2">
    <conflict type="erroneous initiation">
        <sequence resource="EMBL-CDS" id="ABY22821"/>
    </conflict>
</comment>
<feature type="chain" id="PRO_0000351790" description="Ribosome maturation factor RimM">
    <location>
        <begin position="1"/>
        <end position="175"/>
    </location>
</feature>
<feature type="domain" description="PRC barrel" evidence="1">
    <location>
        <begin position="94"/>
        <end position="166"/>
    </location>
</feature>
<accession>A9WP46</accession>
<gene>
    <name evidence="1" type="primary">rimM</name>
    <name type="ordered locus">RSal33209_1083</name>
</gene>
<protein>
    <recommendedName>
        <fullName evidence="1">Ribosome maturation factor RimM</fullName>
    </recommendedName>
</protein>
<keyword id="KW-0143">Chaperone</keyword>
<keyword id="KW-0963">Cytoplasm</keyword>
<keyword id="KW-1185">Reference proteome</keyword>
<keyword id="KW-0690">Ribosome biogenesis</keyword>
<keyword id="KW-0698">rRNA processing</keyword>